<protein>
    <recommendedName>
        <fullName evidence="1">Small ribosomal subunit protein uS2</fullName>
    </recommendedName>
    <alternativeName>
        <fullName evidence="2">30S ribosomal protein S2</fullName>
    </alternativeName>
</protein>
<keyword id="KW-0687">Ribonucleoprotein</keyword>
<keyword id="KW-0689">Ribosomal protein</keyword>
<evidence type="ECO:0000255" key="1">
    <source>
        <dbReference type="HAMAP-Rule" id="MF_00291"/>
    </source>
</evidence>
<evidence type="ECO:0000305" key="2"/>
<name>RS2_LEGPA</name>
<organism>
    <name type="scientific">Legionella pneumophila (strain Paris)</name>
    <dbReference type="NCBI Taxonomy" id="297246"/>
    <lineage>
        <taxon>Bacteria</taxon>
        <taxon>Pseudomonadati</taxon>
        <taxon>Pseudomonadota</taxon>
        <taxon>Gammaproteobacteria</taxon>
        <taxon>Legionellales</taxon>
        <taxon>Legionellaceae</taxon>
        <taxon>Legionella</taxon>
    </lineage>
</organism>
<dbReference type="EMBL" id="CR628336">
    <property type="protein sequence ID" value="CAH12831.1"/>
    <property type="molecule type" value="Genomic_DNA"/>
</dbReference>
<dbReference type="RefSeq" id="WP_011213985.1">
    <property type="nucleotide sequence ID" value="NC_006368.1"/>
</dbReference>
<dbReference type="SMR" id="Q5X4J7"/>
<dbReference type="KEGG" id="lpp:lpp1679"/>
<dbReference type="LegioList" id="lpp1679"/>
<dbReference type="HOGENOM" id="CLU_040318_1_2_6"/>
<dbReference type="GO" id="GO:0022627">
    <property type="term" value="C:cytosolic small ribosomal subunit"/>
    <property type="evidence" value="ECO:0007669"/>
    <property type="project" value="TreeGrafter"/>
</dbReference>
<dbReference type="GO" id="GO:0003735">
    <property type="term" value="F:structural constituent of ribosome"/>
    <property type="evidence" value="ECO:0007669"/>
    <property type="project" value="InterPro"/>
</dbReference>
<dbReference type="GO" id="GO:0006412">
    <property type="term" value="P:translation"/>
    <property type="evidence" value="ECO:0007669"/>
    <property type="project" value="UniProtKB-UniRule"/>
</dbReference>
<dbReference type="CDD" id="cd01425">
    <property type="entry name" value="RPS2"/>
    <property type="match status" value="1"/>
</dbReference>
<dbReference type="FunFam" id="1.10.287.610:FF:000001">
    <property type="entry name" value="30S ribosomal protein S2"/>
    <property type="match status" value="1"/>
</dbReference>
<dbReference type="Gene3D" id="3.40.50.10490">
    <property type="entry name" value="Glucose-6-phosphate isomerase like protein, domain 1"/>
    <property type="match status" value="1"/>
</dbReference>
<dbReference type="Gene3D" id="1.10.287.610">
    <property type="entry name" value="Helix hairpin bin"/>
    <property type="match status" value="1"/>
</dbReference>
<dbReference type="HAMAP" id="MF_00291_B">
    <property type="entry name" value="Ribosomal_uS2_B"/>
    <property type="match status" value="1"/>
</dbReference>
<dbReference type="InterPro" id="IPR001865">
    <property type="entry name" value="Ribosomal_uS2"/>
</dbReference>
<dbReference type="InterPro" id="IPR005706">
    <property type="entry name" value="Ribosomal_uS2_bac/mit/plastid"/>
</dbReference>
<dbReference type="InterPro" id="IPR018130">
    <property type="entry name" value="Ribosomal_uS2_CS"/>
</dbReference>
<dbReference type="InterPro" id="IPR023591">
    <property type="entry name" value="Ribosomal_uS2_flav_dom_sf"/>
</dbReference>
<dbReference type="NCBIfam" id="TIGR01011">
    <property type="entry name" value="rpsB_bact"/>
    <property type="match status" value="1"/>
</dbReference>
<dbReference type="PANTHER" id="PTHR12534">
    <property type="entry name" value="30S RIBOSOMAL PROTEIN S2 PROKARYOTIC AND ORGANELLAR"/>
    <property type="match status" value="1"/>
</dbReference>
<dbReference type="PANTHER" id="PTHR12534:SF0">
    <property type="entry name" value="SMALL RIBOSOMAL SUBUNIT PROTEIN US2M"/>
    <property type="match status" value="1"/>
</dbReference>
<dbReference type="Pfam" id="PF00318">
    <property type="entry name" value="Ribosomal_S2"/>
    <property type="match status" value="1"/>
</dbReference>
<dbReference type="PRINTS" id="PR00395">
    <property type="entry name" value="RIBOSOMALS2"/>
</dbReference>
<dbReference type="SUPFAM" id="SSF52313">
    <property type="entry name" value="Ribosomal protein S2"/>
    <property type="match status" value="1"/>
</dbReference>
<dbReference type="PROSITE" id="PS00962">
    <property type="entry name" value="RIBOSOMAL_S2_1"/>
    <property type="match status" value="1"/>
</dbReference>
<dbReference type="PROSITE" id="PS00963">
    <property type="entry name" value="RIBOSOMAL_S2_2"/>
    <property type="match status" value="1"/>
</dbReference>
<gene>
    <name evidence="1" type="primary">rpsB</name>
    <name type="ordered locus">lpp1679</name>
</gene>
<proteinExistence type="inferred from homology"/>
<sequence length="254" mass="28750">MNNVSMRELLEAGAHFGHRTRFWNPKMSEYIFGSRNKIHIINLEKTLPMLNDVTNYVSRLAANKAKILFVGTKRAAQDSIREHAKRCGMPYVDHRWLGGMLTNYKTVRQSIFRLKELKEMKEKGLFNDMIKKEALMLTRELEKLERSLGGIENMGGLPDALFVVDVGFEHIAVEEARRLRIPVIGVVDTNNSPDNIDYVIPGNDDSMRAVDIYVRCVADAILDGKNSNTVGRVSSDSEFVEVTSNSNEEEKSGE</sequence>
<feature type="chain" id="PRO_0000134184" description="Small ribosomal subunit protein uS2">
    <location>
        <begin position="1"/>
        <end position="254"/>
    </location>
</feature>
<accession>Q5X4J7</accession>
<comment type="similarity">
    <text evidence="1">Belongs to the universal ribosomal protein uS2 family.</text>
</comment>
<reference key="1">
    <citation type="journal article" date="2004" name="Nat. Genet.">
        <title>Evidence in the Legionella pneumophila genome for exploitation of host cell functions and high genome plasticity.</title>
        <authorList>
            <person name="Cazalet C."/>
            <person name="Rusniok C."/>
            <person name="Brueggemann H."/>
            <person name="Zidane N."/>
            <person name="Magnier A."/>
            <person name="Ma L."/>
            <person name="Tichit M."/>
            <person name="Jarraud S."/>
            <person name="Bouchier C."/>
            <person name="Vandenesch F."/>
            <person name="Kunst F."/>
            <person name="Etienne J."/>
            <person name="Glaser P."/>
            <person name="Buchrieser C."/>
        </authorList>
    </citation>
    <scope>NUCLEOTIDE SEQUENCE [LARGE SCALE GENOMIC DNA]</scope>
    <source>
        <strain>Paris</strain>
    </source>
</reference>